<name>PYY_MYOSC</name>
<organism>
    <name type="scientific">Myoxocephalus scorpius</name>
    <name type="common">Shorthorn sculpin</name>
    <name type="synonym">Cottus scorpius</name>
    <dbReference type="NCBI Taxonomy" id="8097"/>
    <lineage>
        <taxon>Eukaryota</taxon>
        <taxon>Metazoa</taxon>
        <taxon>Chordata</taxon>
        <taxon>Craniata</taxon>
        <taxon>Vertebrata</taxon>
        <taxon>Euteleostomi</taxon>
        <taxon>Actinopterygii</taxon>
        <taxon>Neopterygii</taxon>
        <taxon>Teleostei</taxon>
        <taxon>Neoteleostei</taxon>
        <taxon>Acanthomorphata</taxon>
        <taxon>Eupercaria</taxon>
        <taxon>Perciformes</taxon>
        <taxon>Cottioidei</taxon>
        <taxon>Cottales</taxon>
        <taxon>Cottidae</taxon>
        <taxon>Myoxocephalus</taxon>
    </lineage>
</organism>
<comment type="subcellular location">
    <subcellularLocation>
        <location>Secreted</location>
    </subcellularLocation>
</comment>
<comment type="similarity">
    <text evidence="2">Belongs to the NPY family.</text>
</comment>
<evidence type="ECO:0000269" key="1">
    <source>
    </source>
</evidence>
<evidence type="ECO:0000305" key="2"/>
<dbReference type="PIR" id="A60309">
    <property type="entry name" value="YYFIS"/>
</dbReference>
<dbReference type="SMR" id="P09641"/>
<dbReference type="GO" id="GO:0005615">
    <property type="term" value="C:extracellular space"/>
    <property type="evidence" value="ECO:0007669"/>
    <property type="project" value="TreeGrafter"/>
</dbReference>
<dbReference type="GO" id="GO:0005184">
    <property type="term" value="F:neuropeptide hormone activity"/>
    <property type="evidence" value="ECO:0007669"/>
    <property type="project" value="TreeGrafter"/>
</dbReference>
<dbReference type="GO" id="GO:0031841">
    <property type="term" value="F:neuropeptide Y receptor binding"/>
    <property type="evidence" value="ECO:0007669"/>
    <property type="project" value="TreeGrafter"/>
</dbReference>
<dbReference type="GO" id="GO:0007631">
    <property type="term" value="P:feeding behavior"/>
    <property type="evidence" value="ECO:0007669"/>
    <property type="project" value="TreeGrafter"/>
</dbReference>
<dbReference type="GO" id="GO:0007218">
    <property type="term" value="P:neuropeptide signaling pathway"/>
    <property type="evidence" value="ECO:0007669"/>
    <property type="project" value="TreeGrafter"/>
</dbReference>
<dbReference type="CDD" id="cd00126">
    <property type="entry name" value="PAH"/>
    <property type="match status" value="1"/>
</dbReference>
<dbReference type="Gene3D" id="6.10.250.900">
    <property type="match status" value="1"/>
</dbReference>
<dbReference type="InterPro" id="IPR001955">
    <property type="entry name" value="Pancreatic_hormone-like"/>
</dbReference>
<dbReference type="InterPro" id="IPR020392">
    <property type="entry name" value="Pancreatic_hormone-like_CS"/>
</dbReference>
<dbReference type="PANTHER" id="PTHR10533">
    <property type="entry name" value="NEUROPEPTIDE Y/PANCREATIC HORMONE/PEPTIDE YY"/>
    <property type="match status" value="1"/>
</dbReference>
<dbReference type="PANTHER" id="PTHR10533:SF14">
    <property type="entry name" value="PEPTIDE YY-RELATED"/>
    <property type="match status" value="1"/>
</dbReference>
<dbReference type="Pfam" id="PF00159">
    <property type="entry name" value="Hormone_3"/>
    <property type="match status" value="1"/>
</dbReference>
<dbReference type="PRINTS" id="PR00278">
    <property type="entry name" value="PANCHORMONE"/>
</dbReference>
<dbReference type="SMART" id="SM00309">
    <property type="entry name" value="PAH"/>
    <property type="match status" value="1"/>
</dbReference>
<dbReference type="PROSITE" id="PS00265">
    <property type="entry name" value="PANCREATIC_HORMONE_1"/>
    <property type="match status" value="1"/>
</dbReference>
<dbReference type="PROSITE" id="PS50276">
    <property type="entry name" value="PANCREATIC_HORMONE_2"/>
    <property type="match status" value="1"/>
</dbReference>
<accession>P09641</accession>
<proteinExistence type="evidence at protein level"/>
<protein>
    <recommendedName>
        <fullName>Peptide YY-like</fullName>
        <shortName>PYY</shortName>
    </recommendedName>
</protein>
<reference key="1">
    <citation type="journal article" date="1987" name="FEBS Lett.">
        <title>The amino-acid sequences of sculpin islet somatostatin-28 and peptide YY.</title>
        <authorList>
            <person name="Cutfield S.M."/>
            <person name="Carne A."/>
            <person name="Cutfield J.F."/>
        </authorList>
    </citation>
    <scope>PROTEIN SEQUENCE</scope>
    <source>
        <tissue>Pancreas</tissue>
    </source>
</reference>
<reference key="2">
    <citation type="journal article" date="1986" name="Regul. Pept.">
        <title>Characterization of an amidated form of pancreatic polypeptide from the daddy sculpin (Cottus scorpius).</title>
        <authorList>
            <person name="Conlon J.M."/>
            <person name="Schmidt W.E."/>
            <person name="Gallwitz B."/>
            <person name="Falkmer S."/>
            <person name="Thim L."/>
        </authorList>
    </citation>
    <scope>PROTEIN SEQUENCE</scope>
    <scope>AMIDATION AT TYR-36</scope>
</reference>
<keyword id="KW-0027">Amidation</keyword>
<keyword id="KW-0903">Direct protein sequencing</keyword>
<keyword id="KW-0372">Hormone</keyword>
<keyword id="KW-0964">Secreted</keyword>
<feature type="peptide" id="PRO_0000044814" description="Peptide YY-like">
    <location>
        <begin position="1"/>
        <end position="36"/>
    </location>
</feature>
<feature type="modified residue" description="Tyrosine amide" evidence="1">
    <location>
        <position position="36"/>
    </location>
</feature>
<sequence>YPPQPESPGGNASPEDWAKYHAAVRHYVNLITRQRY</sequence>